<accession>A2RIY6</accession>
<reference key="1">
    <citation type="journal article" date="2007" name="J. Bacteriol.">
        <title>The complete genome sequence of the lactic acid bacterial paradigm Lactococcus lactis subsp. cremoris MG1363.</title>
        <authorList>
            <person name="Wegmann U."/>
            <person name="O'Connell-Motherway M."/>
            <person name="Zomer A."/>
            <person name="Buist G."/>
            <person name="Shearman C."/>
            <person name="Canchaya C."/>
            <person name="Ventura M."/>
            <person name="Goesmann A."/>
            <person name="Gasson M.J."/>
            <person name="Kuipers O.P."/>
            <person name="van Sinderen D."/>
            <person name="Kok J."/>
        </authorList>
    </citation>
    <scope>NUCLEOTIDE SEQUENCE [LARGE SCALE GENOMIC DNA]</scope>
    <source>
        <strain>MG1363</strain>
    </source>
</reference>
<keyword id="KW-0687">Ribonucleoprotein</keyword>
<keyword id="KW-0689">Ribosomal protein</keyword>
<gene>
    <name evidence="1" type="primary">rpmG2</name>
    <name type="synonym">rpmGA</name>
    <name type="ordered locus">llmg_0632</name>
</gene>
<organism>
    <name type="scientific">Lactococcus lactis subsp. cremoris (strain MG1363)</name>
    <dbReference type="NCBI Taxonomy" id="416870"/>
    <lineage>
        <taxon>Bacteria</taxon>
        <taxon>Bacillati</taxon>
        <taxon>Bacillota</taxon>
        <taxon>Bacilli</taxon>
        <taxon>Lactobacillales</taxon>
        <taxon>Streptococcaceae</taxon>
        <taxon>Lactococcus</taxon>
        <taxon>Lactococcus cremoris subsp. cremoris</taxon>
    </lineage>
</organism>
<comment type="similarity">
    <text evidence="1">Belongs to the bacterial ribosomal protein bL33 family.</text>
</comment>
<sequence length="48" mass="5508">MRVKITLICSSCGNKNYISSKNKATHPEKVETMKFCPKERIVTLHREG</sequence>
<name>RL332_LACLM</name>
<protein>
    <recommendedName>
        <fullName evidence="1">Large ribosomal subunit protein bL33B</fullName>
    </recommendedName>
    <alternativeName>
        <fullName evidence="1">50S ribosomal protein L33 2</fullName>
    </alternativeName>
</protein>
<evidence type="ECO:0000255" key="1">
    <source>
        <dbReference type="HAMAP-Rule" id="MF_00294"/>
    </source>
</evidence>
<dbReference type="EMBL" id="AM406671">
    <property type="protein sequence ID" value="CAL97234.1"/>
    <property type="molecule type" value="Genomic_DNA"/>
</dbReference>
<dbReference type="SMR" id="A2RIY6"/>
<dbReference type="STRING" id="416870.llmg_0632"/>
<dbReference type="KEGG" id="llm:llmg_0632"/>
<dbReference type="eggNOG" id="COG0267">
    <property type="taxonomic scope" value="Bacteria"/>
</dbReference>
<dbReference type="HOGENOM" id="CLU_190949_0_2_9"/>
<dbReference type="OrthoDB" id="197660at2"/>
<dbReference type="PhylomeDB" id="A2RIY6"/>
<dbReference type="Proteomes" id="UP000000364">
    <property type="component" value="Chromosome"/>
</dbReference>
<dbReference type="GO" id="GO:0005737">
    <property type="term" value="C:cytoplasm"/>
    <property type="evidence" value="ECO:0007669"/>
    <property type="project" value="UniProtKB-ARBA"/>
</dbReference>
<dbReference type="GO" id="GO:1990904">
    <property type="term" value="C:ribonucleoprotein complex"/>
    <property type="evidence" value="ECO:0007669"/>
    <property type="project" value="UniProtKB-KW"/>
</dbReference>
<dbReference type="GO" id="GO:0005840">
    <property type="term" value="C:ribosome"/>
    <property type="evidence" value="ECO:0007669"/>
    <property type="project" value="UniProtKB-KW"/>
</dbReference>
<dbReference type="GO" id="GO:0003735">
    <property type="term" value="F:structural constituent of ribosome"/>
    <property type="evidence" value="ECO:0007669"/>
    <property type="project" value="InterPro"/>
</dbReference>
<dbReference type="GO" id="GO:0006412">
    <property type="term" value="P:translation"/>
    <property type="evidence" value="ECO:0007669"/>
    <property type="project" value="UniProtKB-UniRule"/>
</dbReference>
<dbReference type="Gene3D" id="2.20.28.120">
    <property type="entry name" value="Ribosomal protein L33"/>
    <property type="match status" value="1"/>
</dbReference>
<dbReference type="HAMAP" id="MF_00294">
    <property type="entry name" value="Ribosomal_bL33"/>
    <property type="match status" value="1"/>
</dbReference>
<dbReference type="InterPro" id="IPR001705">
    <property type="entry name" value="Ribosomal_bL33"/>
</dbReference>
<dbReference type="InterPro" id="IPR018264">
    <property type="entry name" value="Ribosomal_bL33_CS"/>
</dbReference>
<dbReference type="InterPro" id="IPR038584">
    <property type="entry name" value="Ribosomal_bL33_sf"/>
</dbReference>
<dbReference type="InterPro" id="IPR011332">
    <property type="entry name" value="Ribosomal_zn-bd"/>
</dbReference>
<dbReference type="NCBIfam" id="NF001764">
    <property type="entry name" value="PRK00504.1"/>
    <property type="match status" value="1"/>
</dbReference>
<dbReference type="NCBIfam" id="NF001860">
    <property type="entry name" value="PRK00595.1"/>
    <property type="match status" value="1"/>
</dbReference>
<dbReference type="NCBIfam" id="TIGR01023">
    <property type="entry name" value="rpmG_bact"/>
    <property type="match status" value="1"/>
</dbReference>
<dbReference type="PANTHER" id="PTHR43168">
    <property type="entry name" value="50S RIBOSOMAL PROTEIN L33, CHLOROPLASTIC"/>
    <property type="match status" value="1"/>
</dbReference>
<dbReference type="PANTHER" id="PTHR43168:SF6">
    <property type="entry name" value="LARGE RIBOSOMAL SUBUNIT PROTEIN BL33A"/>
    <property type="match status" value="1"/>
</dbReference>
<dbReference type="Pfam" id="PF00471">
    <property type="entry name" value="Ribosomal_L33"/>
    <property type="match status" value="1"/>
</dbReference>
<dbReference type="SUPFAM" id="SSF57829">
    <property type="entry name" value="Zn-binding ribosomal proteins"/>
    <property type="match status" value="1"/>
</dbReference>
<dbReference type="PROSITE" id="PS00582">
    <property type="entry name" value="RIBOSOMAL_L33"/>
    <property type="match status" value="1"/>
</dbReference>
<proteinExistence type="inferred from homology"/>
<feature type="chain" id="PRO_0000356516" description="Large ribosomal subunit protein bL33B">
    <location>
        <begin position="1"/>
        <end position="48"/>
    </location>
</feature>